<protein>
    <recommendedName>
        <fullName>Endogenous retrovirus group K member 21 Pro protein</fullName>
    </recommendedName>
    <alternativeName>
        <fullName>HERV-K_12q14.1 provirus ancestral Pro protein</fullName>
        <ecNumber>3.4.23.50</ecNumber>
    </alternativeName>
    <alternativeName>
        <fullName>Protease</fullName>
    </alternativeName>
    <alternativeName>
        <fullName>Proteinase</fullName>
        <shortName>PR</shortName>
    </alternativeName>
</protein>
<accession>P63119</accession>
<proteinExistence type="inferred from homology"/>
<dbReference type="EC" id="3.4.23.50"/>
<dbReference type="EMBL" id="AC025420">
    <property type="status" value="NOT_ANNOTATED_CDS"/>
    <property type="molecule type" value="Genomic_DNA"/>
</dbReference>
<dbReference type="SMR" id="P63119"/>
<dbReference type="BioMuta" id="HGNC:39035"/>
<dbReference type="DMDM" id="52000850"/>
<dbReference type="PeptideAtlas" id="P63119"/>
<dbReference type="GeneCards" id="ERVK-21"/>
<dbReference type="HGNC" id="HGNC:39035">
    <property type="gene designation" value="ERVK-21"/>
</dbReference>
<dbReference type="neXtProt" id="NX_P63119"/>
<dbReference type="PhylomeDB" id="P63119"/>
<dbReference type="Pharos" id="P63119">
    <property type="development level" value="Tdark"/>
</dbReference>
<dbReference type="Proteomes" id="UP000005640">
    <property type="component" value="Unplaced"/>
</dbReference>
<dbReference type="GO" id="GO:0004190">
    <property type="term" value="F:aspartic-type endopeptidase activity"/>
    <property type="evidence" value="ECO:0007669"/>
    <property type="project" value="UniProtKB-KW"/>
</dbReference>
<dbReference type="GO" id="GO:0003676">
    <property type="term" value="F:nucleic acid binding"/>
    <property type="evidence" value="ECO:0007669"/>
    <property type="project" value="InterPro"/>
</dbReference>
<dbReference type="GO" id="GO:0006508">
    <property type="term" value="P:proteolysis"/>
    <property type="evidence" value="ECO:0007669"/>
    <property type="project" value="UniProtKB-KW"/>
</dbReference>
<dbReference type="GO" id="GO:0075523">
    <property type="term" value="P:viral translational frameshifting"/>
    <property type="evidence" value="ECO:0007669"/>
    <property type="project" value="UniProtKB-KW"/>
</dbReference>
<dbReference type="CDD" id="cd05482">
    <property type="entry name" value="HIV_retropepsin_like"/>
    <property type="match status" value="1"/>
</dbReference>
<dbReference type="Gene3D" id="2.40.70.10">
    <property type="entry name" value="Acid Proteases"/>
    <property type="match status" value="1"/>
</dbReference>
<dbReference type="InterPro" id="IPR001969">
    <property type="entry name" value="Aspartic_peptidase_AS"/>
</dbReference>
<dbReference type="InterPro" id="IPR000467">
    <property type="entry name" value="G_patch_dom"/>
</dbReference>
<dbReference type="InterPro" id="IPR051592">
    <property type="entry name" value="HERV-K_Pro_peptidase_A2"/>
</dbReference>
<dbReference type="InterPro" id="IPR001995">
    <property type="entry name" value="Peptidase_A2_cat"/>
</dbReference>
<dbReference type="InterPro" id="IPR021109">
    <property type="entry name" value="Peptidase_aspartic_dom_sf"/>
</dbReference>
<dbReference type="InterPro" id="IPR034170">
    <property type="entry name" value="Retropepsin-like_cat_dom"/>
</dbReference>
<dbReference type="InterPro" id="IPR018061">
    <property type="entry name" value="Retropepsins"/>
</dbReference>
<dbReference type="PANTHER" id="PTHR19422">
    <property type="entry name" value="GAG RETROVIRAL POLYPROTEIN"/>
    <property type="match status" value="1"/>
</dbReference>
<dbReference type="PANTHER" id="PTHR19422:SF123">
    <property type="entry name" value="RT1 CLASS I, LOCUS CE15"/>
    <property type="match status" value="1"/>
</dbReference>
<dbReference type="Pfam" id="PF01585">
    <property type="entry name" value="G-patch"/>
    <property type="match status" value="1"/>
</dbReference>
<dbReference type="Pfam" id="PF00077">
    <property type="entry name" value="RVP"/>
    <property type="match status" value="1"/>
</dbReference>
<dbReference type="SMART" id="SM00443">
    <property type="entry name" value="G_patch"/>
    <property type="match status" value="1"/>
</dbReference>
<dbReference type="SUPFAM" id="SSF50630">
    <property type="entry name" value="Acid proteases"/>
    <property type="match status" value="1"/>
</dbReference>
<dbReference type="PROSITE" id="PS50175">
    <property type="entry name" value="ASP_PROT_RETROV"/>
    <property type="match status" value="1"/>
</dbReference>
<dbReference type="PROSITE" id="PS00141">
    <property type="entry name" value="ASP_PROTEASE"/>
    <property type="match status" value="1"/>
</dbReference>
<dbReference type="PROSITE" id="PS50174">
    <property type="entry name" value="G_PATCH"/>
    <property type="match status" value="1"/>
</dbReference>
<sequence>WASQVSENRPVCKAIIQGKQFEGLVDTGADVSIIALNQWPKNWPKQKAVTGLVGIGTASEVYQSTEILHCLGPDNQESTVQPMITSIPLNLWGRDLLQQWGAEITMPTPLYSPTSQKIMTKMGYIPGKGLGKNEDGIKVPVEAKINQKREGIGYPF</sequence>
<keyword id="KW-0064">Aspartyl protease</keyword>
<keyword id="KW-0068">Autocatalytic cleavage</keyword>
<keyword id="KW-0895">ERV</keyword>
<keyword id="KW-0378">Hydrolase</keyword>
<keyword id="KW-0645">Protease</keyword>
<keyword id="KW-1185">Reference proteome</keyword>
<keyword id="KW-0688">Ribosomal frameshifting</keyword>
<keyword id="KW-0814">Transposable element</keyword>
<gene>
    <name type="primary">ERVK-21</name>
</gene>
<comment type="function">
    <text>Retroviral proteases have roles in the processing of the primary translation products and the maturation of the viral particle. Endogenous Pro proteins may have kept, lost or modified their original function during evolution.</text>
</comment>
<comment type="catalytic activity">
    <reaction>
        <text>Processing at the authentic HIV-1 PR recognition site and release of the mature p17 matrix and the p24 capsid protein, as a result of the cleavage of the -SQNY-|-PIVQ- cleavage site.</text>
        <dbReference type="EC" id="3.4.23.50"/>
    </reaction>
</comment>
<comment type="subunit">
    <text evidence="1">Active as a homodimer.</text>
</comment>
<comment type="alternative products">
    <event type="ribosomal frameshifting"/>
    <isoform>
        <id>P63119-1</id>
        <name>1</name>
        <sequence type="displayed"/>
    </isoform>
    <text>This protein is synthesized as Gag-Pro and Gag-Pro-Pol polyprotein. These polyproteins are thought, by similarity with type-B retroviruses, to be generated by -1 frameshifts occurring at the Gag-Pro and Pro-Pol genes boundaries.</text>
</comment>
<comment type="PTM">
    <text evidence="1">Autoproteolytically processed at the N-terminus. Expected C-terminal autoprocessing not detected. The sequence shown is that of the processed Pro protein (By similarity).</text>
</comment>
<comment type="similarity">
    <text evidence="5">Belongs to the peptidase A2 family. HERV class-II K(HML-2) subfamily.</text>
</comment>
<feature type="chain" id="PRO_0000199536" description="Endogenous retrovirus group K member 21 Pro protein">
    <location>
        <begin position="1"/>
        <end position="156"/>
    </location>
</feature>
<feature type="domain" description="Peptidase A2" evidence="3">
    <location>
        <begin position="21"/>
        <end position="96"/>
    </location>
</feature>
<feature type="domain" description="G-patch" evidence="2">
    <location>
        <begin position="111"/>
        <end position="156"/>
    </location>
</feature>
<feature type="active site" evidence="4">
    <location>
        <position position="26"/>
    </location>
</feature>
<organism>
    <name type="scientific">Homo sapiens</name>
    <name type="common">Human</name>
    <dbReference type="NCBI Taxonomy" id="9606"/>
    <lineage>
        <taxon>Eukaryota</taxon>
        <taxon>Metazoa</taxon>
        <taxon>Chordata</taxon>
        <taxon>Craniata</taxon>
        <taxon>Vertebrata</taxon>
        <taxon>Euteleostomi</taxon>
        <taxon>Mammalia</taxon>
        <taxon>Eutheria</taxon>
        <taxon>Euarchontoglires</taxon>
        <taxon>Primates</taxon>
        <taxon>Haplorrhini</taxon>
        <taxon>Catarrhini</taxon>
        <taxon>Hominidae</taxon>
        <taxon>Homo</taxon>
    </lineage>
</organism>
<reference key="1">
    <citation type="journal article" date="2006" name="Nature">
        <title>The finished DNA sequence of human chromosome 12.</title>
        <authorList>
            <person name="Scherer S.E."/>
            <person name="Muzny D.M."/>
            <person name="Buhay C.J."/>
            <person name="Chen R."/>
            <person name="Cree A."/>
            <person name="Ding Y."/>
            <person name="Dugan-Rocha S."/>
            <person name="Gill R."/>
            <person name="Gunaratne P."/>
            <person name="Harris R.A."/>
            <person name="Hawes A.C."/>
            <person name="Hernandez J."/>
            <person name="Hodgson A.V."/>
            <person name="Hume J."/>
            <person name="Jackson A."/>
            <person name="Khan Z.M."/>
            <person name="Kovar-Smith C."/>
            <person name="Lewis L.R."/>
            <person name="Lozado R.J."/>
            <person name="Metzker M.L."/>
            <person name="Milosavljevic A."/>
            <person name="Miner G.R."/>
            <person name="Montgomery K.T."/>
            <person name="Morgan M.B."/>
            <person name="Nazareth L.V."/>
            <person name="Scott G."/>
            <person name="Sodergren E."/>
            <person name="Song X.-Z."/>
            <person name="Steffen D."/>
            <person name="Lovering R.C."/>
            <person name="Wheeler D.A."/>
            <person name="Worley K.C."/>
            <person name="Yuan Y."/>
            <person name="Zhang Z."/>
            <person name="Adams C.Q."/>
            <person name="Ansari-Lari M.A."/>
            <person name="Ayele M."/>
            <person name="Brown M.J."/>
            <person name="Chen G."/>
            <person name="Chen Z."/>
            <person name="Clerc-Blankenburg K.P."/>
            <person name="Davis C."/>
            <person name="Delgado O."/>
            <person name="Dinh H.H."/>
            <person name="Draper H."/>
            <person name="Gonzalez-Garay M.L."/>
            <person name="Havlak P."/>
            <person name="Jackson L.R."/>
            <person name="Jacob L.S."/>
            <person name="Kelly S.H."/>
            <person name="Li L."/>
            <person name="Li Z."/>
            <person name="Liu J."/>
            <person name="Liu W."/>
            <person name="Lu J."/>
            <person name="Maheshwari M."/>
            <person name="Nguyen B.-V."/>
            <person name="Okwuonu G.O."/>
            <person name="Pasternak S."/>
            <person name="Perez L.M."/>
            <person name="Plopper F.J.H."/>
            <person name="Santibanez J."/>
            <person name="Shen H."/>
            <person name="Tabor P.E."/>
            <person name="Verduzco D."/>
            <person name="Waldron L."/>
            <person name="Wang Q."/>
            <person name="Williams G.A."/>
            <person name="Zhang J."/>
            <person name="Zhou J."/>
            <person name="Allen C.C."/>
            <person name="Amin A.G."/>
            <person name="Anyalebechi V."/>
            <person name="Bailey M."/>
            <person name="Barbaria J.A."/>
            <person name="Bimage K.E."/>
            <person name="Bryant N.P."/>
            <person name="Burch P.E."/>
            <person name="Burkett C.E."/>
            <person name="Burrell K.L."/>
            <person name="Calderon E."/>
            <person name="Cardenas V."/>
            <person name="Carter K."/>
            <person name="Casias K."/>
            <person name="Cavazos I."/>
            <person name="Cavazos S.R."/>
            <person name="Ceasar H."/>
            <person name="Chacko J."/>
            <person name="Chan S.N."/>
            <person name="Chavez D."/>
            <person name="Christopoulos C."/>
            <person name="Chu J."/>
            <person name="Cockrell R."/>
            <person name="Cox C.D."/>
            <person name="Dang M."/>
            <person name="Dathorne S.R."/>
            <person name="David R."/>
            <person name="Davis C.M."/>
            <person name="Davy-Carroll L."/>
            <person name="Deshazo D.R."/>
            <person name="Donlin J.E."/>
            <person name="D'Souza L."/>
            <person name="Eaves K.A."/>
            <person name="Egan A."/>
            <person name="Emery-Cohen A.J."/>
            <person name="Escotto M."/>
            <person name="Flagg N."/>
            <person name="Forbes L.D."/>
            <person name="Gabisi A.M."/>
            <person name="Garza M."/>
            <person name="Hamilton C."/>
            <person name="Henderson N."/>
            <person name="Hernandez O."/>
            <person name="Hines S."/>
            <person name="Hogues M.E."/>
            <person name="Huang M."/>
            <person name="Idlebird D.G."/>
            <person name="Johnson R."/>
            <person name="Jolivet A."/>
            <person name="Jones S."/>
            <person name="Kagan R."/>
            <person name="King L.M."/>
            <person name="Leal B."/>
            <person name="Lebow H."/>
            <person name="Lee S."/>
            <person name="LeVan J.M."/>
            <person name="Lewis L.C."/>
            <person name="London P."/>
            <person name="Lorensuhewa L.M."/>
            <person name="Loulseged H."/>
            <person name="Lovett D.A."/>
            <person name="Lucier A."/>
            <person name="Lucier R.L."/>
            <person name="Ma J."/>
            <person name="Madu R.C."/>
            <person name="Mapua P."/>
            <person name="Martindale A.D."/>
            <person name="Martinez E."/>
            <person name="Massey E."/>
            <person name="Mawhiney S."/>
            <person name="Meador M.G."/>
            <person name="Mendez S."/>
            <person name="Mercado C."/>
            <person name="Mercado I.C."/>
            <person name="Merritt C.E."/>
            <person name="Miner Z.L."/>
            <person name="Minja E."/>
            <person name="Mitchell T."/>
            <person name="Mohabbat F."/>
            <person name="Mohabbat K."/>
            <person name="Montgomery B."/>
            <person name="Moore N."/>
            <person name="Morris S."/>
            <person name="Munidasa M."/>
            <person name="Ngo R.N."/>
            <person name="Nguyen N.B."/>
            <person name="Nickerson E."/>
            <person name="Nwaokelemeh O.O."/>
            <person name="Nwokenkwo S."/>
            <person name="Obregon M."/>
            <person name="Oguh M."/>
            <person name="Oragunye N."/>
            <person name="Oviedo R.J."/>
            <person name="Parish B.J."/>
            <person name="Parker D.N."/>
            <person name="Parrish J."/>
            <person name="Parks K.L."/>
            <person name="Paul H.A."/>
            <person name="Payton B.A."/>
            <person name="Perez A."/>
            <person name="Perrin W."/>
            <person name="Pickens A."/>
            <person name="Primus E.L."/>
            <person name="Pu L.-L."/>
            <person name="Puazo M."/>
            <person name="Quiles M.M."/>
            <person name="Quiroz J.B."/>
            <person name="Rabata D."/>
            <person name="Reeves K."/>
            <person name="Ruiz S.J."/>
            <person name="Shao H."/>
            <person name="Sisson I."/>
            <person name="Sonaike T."/>
            <person name="Sorelle R.P."/>
            <person name="Sutton A.E."/>
            <person name="Svatek A.F."/>
            <person name="Svetz L.A."/>
            <person name="Tamerisa K.S."/>
            <person name="Taylor T.R."/>
            <person name="Teague B."/>
            <person name="Thomas N."/>
            <person name="Thorn R.D."/>
            <person name="Trejos Z.Y."/>
            <person name="Trevino B.K."/>
            <person name="Ukegbu O.N."/>
            <person name="Urban J.B."/>
            <person name="Vasquez L.I."/>
            <person name="Vera V.A."/>
            <person name="Villasana D.M."/>
            <person name="Wang L."/>
            <person name="Ward-Moore S."/>
            <person name="Warren J.T."/>
            <person name="Wei X."/>
            <person name="White F."/>
            <person name="Williamson A.L."/>
            <person name="Wleczyk R."/>
            <person name="Wooden H.S."/>
            <person name="Wooden S.H."/>
            <person name="Yen J."/>
            <person name="Yoon L."/>
            <person name="Yoon V."/>
            <person name="Zorrilla S.E."/>
            <person name="Nelson D."/>
            <person name="Kucherlapati R."/>
            <person name="Weinstock G."/>
            <person name="Gibbs R.A."/>
        </authorList>
    </citation>
    <scope>NUCLEOTIDE SEQUENCE [LARGE SCALE GENOMIC DNA]</scope>
</reference>
<evidence type="ECO:0000250" key="1"/>
<evidence type="ECO:0000255" key="2">
    <source>
        <dbReference type="PROSITE-ProRule" id="PRU00092"/>
    </source>
</evidence>
<evidence type="ECO:0000255" key="3">
    <source>
        <dbReference type="PROSITE-ProRule" id="PRU00275"/>
    </source>
</evidence>
<evidence type="ECO:0000255" key="4">
    <source>
        <dbReference type="PROSITE-ProRule" id="PRU10094"/>
    </source>
</evidence>
<evidence type="ECO:0000305" key="5"/>
<name>VPK21_HUMAN</name>